<comment type="function">
    <text evidence="4 7">Regulates the dynamic behavior of MamK filaments; paralog MamJ also promotes MamK turnover. At least one other protein besides MamJ and LimJ is required for MamK turnover (PubMed:21883528). Might connect magnetosomes to MamK filaments (Probable).</text>
</comment>
<comment type="subcellular location">
    <subcellularLocation>
        <location evidence="3 7">Magnetosome</location>
    </subcellularLocation>
    <text evidence="1 7">Tagged protein extends in a line from one pole to the other.</text>
</comment>
<comment type="domain">
    <text evidence="6">The center of the protein is Glu- and Pro-rich.</text>
</comment>
<comment type="disruption phenotype">
    <text evidence="4">Single gene deletion, no effect on magnetic response, the magnetosome chain or MamK filaments. A double mamJ/limJ deletion has wild-type magnetic response, but forms large gaps in the magnetosome chains reminiscent of the mamK deletion. MamK forms bundles in these gaps, but the MamK filaments are no longer dynamic.</text>
</comment>
<comment type="miscellaneous">
    <text evidence="6">This bacteria makes up to 20 cubo-octahedral magnetosomes of about 45 nm in diameter which contain membrane-bound crystals of magnetite (Fe(3)O(4)).</text>
</comment>
<comment type="similarity">
    <text evidence="6">Belongs to the magnetosome MamJ protein family.</text>
</comment>
<keyword id="KW-0091">Biomineralization</keyword>
<keyword id="KW-1281">Magnetosome</keyword>
<gene>
    <name evidence="5" type="primary">limJ</name>
    <name type="ordered locus">amb1003</name>
</gene>
<dbReference type="EMBL" id="AP007255">
    <property type="protein sequence ID" value="BAE49807.1"/>
    <property type="molecule type" value="Genomic_DNA"/>
</dbReference>
<dbReference type="SMR" id="Q2W8L8"/>
<dbReference type="STRING" id="342108.amb1003"/>
<dbReference type="KEGG" id="mag:amb1003"/>
<dbReference type="HOGENOM" id="CLU_870976_0_0_5"/>
<dbReference type="Proteomes" id="UP000007058">
    <property type="component" value="Chromosome"/>
</dbReference>
<dbReference type="GO" id="GO:0110143">
    <property type="term" value="C:magnetosome"/>
    <property type="evidence" value="ECO:0000315"/>
    <property type="project" value="UniProtKB"/>
</dbReference>
<dbReference type="GO" id="GO:0140923">
    <property type="term" value="P:magnetosome assembly"/>
    <property type="evidence" value="ECO:0000315"/>
    <property type="project" value="UniProtKB"/>
</dbReference>
<proteinExistence type="inferred from homology"/>
<name>LIMJ_PARM1</name>
<reference key="1">
    <citation type="journal article" date="2005" name="DNA Res.">
        <title>Complete genome sequence of the facultative anaerobic magnetotactic bacterium Magnetospirillum sp. strain AMB-1.</title>
        <authorList>
            <person name="Matsunaga T."/>
            <person name="Okamura Y."/>
            <person name="Fukuda Y."/>
            <person name="Wahyudi A.T."/>
            <person name="Murase Y."/>
            <person name="Takeyama H."/>
        </authorList>
    </citation>
    <scope>NUCLEOTIDE SEQUENCE [LARGE SCALE GENOMIC DNA]</scope>
    <scope>SUBCELLULAR LOCATION</scope>
    <source>
        <strain>ATCC 700264 / AMB-1</strain>
    </source>
</reference>
<reference key="2">
    <citation type="journal article" date="2011" name="Mol. Microbiol.">
        <title>MamK, a bacterial actin, forms dynamic filaments in vivo that are regulated by the acidic proteins MamJ and LimJ.</title>
        <authorList>
            <person name="Draper O."/>
            <person name="Byrne M.E."/>
            <person name="Li Z."/>
            <person name="Keyhani S."/>
            <person name="Barrozo J.C."/>
            <person name="Jensen G."/>
            <person name="Komeili A."/>
        </authorList>
    </citation>
    <scope>FUNCTION</scope>
    <scope>DISRUPTION PHENOTYPE</scope>
    <source>
        <strain>ATCC 700264 / AMB-1</strain>
    </source>
</reference>
<feature type="chain" id="PRO_0000447805" description="MamJ paralog LimJ">
    <location>
        <begin position="1"/>
        <end position="319"/>
    </location>
</feature>
<feature type="region of interest" description="Disordered" evidence="2">
    <location>
        <begin position="1"/>
        <end position="59"/>
    </location>
</feature>
<feature type="region of interest" description="Disordered" evidence="2">
    <location>
        <begin position="145"/>
        <end position="176"/>
    </location>
</feature>
<feature type="compositionally biased region" description="Low complexity" evidence="2">
    <location>
        <begin position="30"/>
        <end position="52"/>
    </location>
</feature>
<feature type="compositionally biased region" description="Acidic residues" evidence="2">
    <location>
        <begin position="150"/>
        <end position="164"/>
    </location>
</feature>
<evidence type="ECO:0000250" key="1">
    <source>
        <dbReference type="UniProtKB" id="Q2W8Q7"/>
    </source>
</evidence>
<evidence type="ECO:0000256" key="2">
    <source>
        <dbReference type="SAM" id="MobiDB-lite"/>
    </source>
</evidence>
<evidence type="ECO:0000269" key="3">
    <source>
    </source>
</evidence>
<evidence type="ECO:0000269" key="4">
    <source>
    </source>
</evidence>
<evidence type="ECO:0000303" key="5">
    <source>
    </source>
</evidence>
<evidence type="ECO:0000305" key="6"/>
<evidence type="ECO:0000305" key="7">
    <source>
    </source>
</evidence>
<organism>
    <name type="scientific">Paramagnetospirillum magneticum (strain ATCC 700264 / AMB-1)</name>
    <name type="common">Magnetospirillum magneticum</name>
    <dbReference type="NCBI Taxonomy" id="342108"/>
    <lineage>
        <taxon>Bacteria</taxon>
        <taxon>Pseudomonadati</taxon>
        <taxon>Pseudomonadota</taxon>
        <taxon>Alphaproteobacteria</taxon>
        <taxon>Rhodospirillales</taxon>
        <taxon>Magnetospirillaceae</taxon>
        <taxon>Paramagnetospirillum</taxon>
    </lineage>
</organism>
<accession>Q2W8L8</accession>
<sequence length="319" mass="32873">MMMEHEMATNRRPRAKRTPGDKLGKGGGDAALAPAADAEIPASSAPEPAAPISAPPAPVIKPVGGDAWASLLSGSPWSSPGAASPTEAALKPVMPSALAEAVANAPPEAAPFTELVSHWSPPFRRQPDREYEEINPAEAAIPVTAAAPEPEPEPVPEPEPEPEPEAAHDHAATETEGVTEMMTSDVELEIEIASDVEVVEAPAVIEPSPRPQAFSHSTAYAYPAEPAPAVETAAEAAPAGPAENPVKEVPVEDLFTGIFNVADSAVRGAIGASTDLLRDPKSLGGKLSVAGQSLVHSIKGRFNALLAPRHGAKSNGDEF</sequence>
<protein>
    <recommendedName>
        <fullName evidence="5">MamJ paralog LimJ</fullName>
    </recommendedName>
</protein>